<sequence>MSVSITKKFYKLDINRTEWEIPDIYQDLQPVGSGAYGQVSKAVVRGTNMHVAIKKLARPFQSAVHAKRTYRELRLLKHMDHENVIGLLDIFHPHPANGSLENFQQVYLVTHLMDADLNNIIRMQHLSDDHVQFLVYQILRGLKYIHSAGVIHRDLKPSNIAVNEDCELRILDFGLARPTENEMTGYVATRWYRAPEIMLNWMHYDQTVDIWSVGCIMAELITRRTLFPGTDHIHQLNLIMEMLGTPPAEFLKKISSESARSYIQSLPPMKGRSFKNVFKNANPLAIDLLEKMLELDAEKRITAEEALSHPYLEKYAEPSVEQTSPPYDHSFEDMDLPVDKWKELIYKEVTNFKPPPSYAQVLKDVK</sequence>
<accession>O62618</accession>
<accession>A4V3C0</accession>
<accession>O46216</accession>
<accession>Q9TXB4</accession>
<proteinExistence type="evidence at protein level"/>
<reference key="1">
    <citation type="journal article" date="1998" name="J. Biol. Chem.">
        <title>Molecular cloning and characterization of a Drosophila p38 mitogen-activated protein kinase.</title>
        <authorList>
            <person name="Han S.-J."/>
            <person name="Choi K.-Y."/>
            <person name="Brey P.T."/>
            <person name="Lee W.-J."/>
        </authorList>
    </citation>
    <scope>NUCLEOTIDE SEQUENCE [MRNA]</scope>
    <scope>PHOSPHORYLATION AT TYR-186</scope>
    <scope>FUNCTION</scope>
    <scope>SUBCELLULAR LOCATION</scope>
    <scope>ACTIVITY REGULATION</scope>
    <source>
        <tissue>Hemocyte</tissue>
    </source>
</reference>
<reference key="2">
    <citation type="journal article" date="1998" name="Mol. Cell. Biol.">
        <title>A conserved p38 mitogen-activated protein kinase pathway regulates Drosophila immunity gene expression.</title>
        <authorList>
            <person name="Han Z.S."/>
            <person name="Enslen H."/>
            <person name="Hu X."/>
            <person name="Meng X."/>
            <person name="Wu I.-H."/>
            <person name="Barrett T."/>
            <person name="Davis R.J."/>
            <person name="Ip Y.T."/>
        </authorList>
    </citation>
    <scope>NUCLEOTIDE SEQUENCE [GENOMIC DNA / MRNA]</scope>
    <scope>FUNCTION</scope>
    <scope>DEVELOPMENTAL STAGE</scope>
    <scope>ACTIVITY REGULATION</scope>
    <source>
        <tissue>Embryo</tissue>
    </source>
</reference>
<reference key="3">
    <citation type="journal article" date="2000" name="Science">
        <title>The genome sequence of Drosophila melanogaster.</title>
        <authorList>
            <person name="Adams M.D."/>
            <person name="Celniker S.E."/>
            <person name="Holt R.A."/>
            <person name="Evans C.A."/>
            <person name="Gocayne J.D."/>
            <person name="Amanatides P.G."/>
            <person name="Scherer S.E."/>
            <person name="Li P.W."/>
            <person name="Hoskins R.A."/>
            <person name="Galle R.F."/>
            <person name="George R.A."/>
            <person name="Lewis S.E."/>
            <person name="Richards S."/>
            <person name="Ashburner M."/>
            <person name="Henderson S.N."/>
            <person name="Sutton G.G."/>
            <person name="Wortman J.R."/>
            <person name="Yandell M.D."/>
            <person name="Zhang Q."/>
            <person name="Chen L.X."/>
            <person name="Brandon R.C."/>
            <person name="Rogers Y.-H.C."/>
            <person name="Blazej R.G."/>
            <person name="Champe M."/>
            <person name="Pfeiffer B.D."/>
            <person name="Wan K.H."/>
            <person name="Doyle C."/>
            <person name="Baxter E.G."/>
            <person name="Helt G."/>
            <person name="Nelson C.R."/>
            <person name="Miklos G.L.G."/>
            <person name="Abril J.F."/>
            <person name="Agbayani A."/>
            <person name="An H.-J."/>
            <person name="Andrews-Pfannkoch C."/>
            <person name="Baldwin D."/>
            <person name="Ballew R.M."/>
            <person name="Basu A."/>
            <person name="Baxendale J."/>
            <person name="Bayraktaroglu L."/>
            <person name="Beasley E.M."/>
            <person name="Beeson K.Y."/>
            <person name="Benos P.V."/>
            <person name="Berman B.P."/>
            <person name="Bhandari D."/>
            <person name="Bolshakov S."/>
            <person name="Borkova D."/>
            <person name="Botchan M.R."/>
            <person name="Bouck J."/>
            <person name="Brokstein P."/>
            <person name="Brottier P."/>
            <person name="Burtis K.C."/>
            <person name="Busam D.A."/>
            <person name="Butler H."/>
            <person name="Cadieu E."/>
            <person name="Center A."/>
            <person name="Chandra I."/>
            <person name="Cherry J.M."/>
            <person name="Cawley S."/>
            <person name="Dahlke C."/>
            <person name="Davenport L.B."/>
            <person name="Davies P."/>
            <person name="de Pablos B."/>
            <person name="Delcher A."/>
            <person name="Deng Z."/>
            <person name="Mays A.D."/>
            <person name="Dew I."/>
            <person name="Dietz S.M."/>
            <person name="Dodson K."/>
            <person name="Doup L.E."/>
            <person name="Downes M."/>
            <person name="Dugan-Rocha S."/>
            <person name="Dunkov B.C."/>
            <person name="Dunn P."/>
            <person name="Durbin K.J."/>
            <person name="Evangelista C.C."/>
            <person name="Ferraz C."/>
            <person name="Ferriera S."/>
            <person name="Fleischmann W."/>
            <person name="Fosler C."/>
            <person name="Gabrielian A.E."/>
            <person name="Garg N.S."/>
            <person name="Gelbart W.M."/>
            <person name="Glasser K."/>
            <person name="Glodek A."/>
            <person name="Gong F."/>
            <person name="Gorrell J.H."/>
            <person name="Gu Z."/>
            <person name="Guan P."/>
            <person name="Harris M."/>
            <person name="Harris N.L."/>
            <person name="Harvey D.A."/>
            <person name="Heiman T.J."/>
            <person name="Hernandez J.R."/>
            <person name="Houck J."/>
            <person name="Hostin D."/>
            <person name="Houston K.A."/>
            <person name="Howland T.J."/>
            <person name="Wei M.-H."/>
            <person name="Ibegwam C."/>
            <person name="Jalali M."/>
            <person name="Kalush F."/>
            <person name="Karpen G.H."/>
            <person name="Ke Z."/>
            <person name="Kennison J.A."/>
            <person name="Ketchum K.A."/>
            <person name="Kimmel B.E."/>
            <person name="Kodira C.D."/>
            <person name="Kraft C.L."/>
            <person name="Kravitz S."/>
            <person name="Kulp D."/>
            <person name="Lai Z."/>
            <person name="Lasko P."/>
            <person name="Lei Y."/>
            <person name="Levitsky A.A."/>
            <person name="Li J.H."/>
            <person name="Li Z."/>
            <person name="Liang Y."/>
            <person name="Lin X."/>
            <person name="Liu X."/>
            <person name="Mattei B."/>
            <person name="McIntosh T.C."/>
            <person name="McLeod M.P."/>
            <person name="McPherson D."/>
            <person name="Merkulov G."/>
            <person name="Milshina N.V."/>
            <person name="Mobarry C."/>
            <person name="Morris J."/>
            <person name="Moshrefi A."/>
            <person name="Mount S.M."/>
            <person name="Moy M."/>
            <person name="Murphy B."/>
            <person name="Murphy L."/>
            <person name="Muzny D.M."/>
            <person name="Nelson D.L."/>
            <person name="Nelson D.R."/>
            <person name="Nelson K.A."/>
            <person name="Nixon K."/>
            <person name="Nusskern D.R."/>
            <person name="Pacleb J.M."/>
            <person name="Palazzolo M."/>
            <person name="Pittman G.S."/>
            <person name="Pan S."/>
            <person name="Pollard J."/>
            <person name="Puri V."/>
            <person name="Reese M.G."/>
            <person name="Reinert K."/>
            <person name="Remington K."/>
            <person name="Saunders R.D.C."/>
            <person name="Scheeler F."/>
            <person name="Shen H."/>
            <person name="Shue B.C."/>
            <person name="Siden-Kiamos I."/>
            <person name="Simpson M."/>
            <person name="Skupski M.P."/>
            <person name="Smith T.J."/>
            <person name="Spier E."/>
            <person name="Spradling A.C."/>
            <person name="Stapleton M."/>
            <person name="Strong R."/>
            <person name="Sun E."/>
            <person name="Svirskas R."/>
            <person name="Tector C."/>
            <person name="Turner R."/>
            <person name="Venter E."/>
            <person name="Wang A.H."/>
            <person name="Wang X."/>
            <person name="Wang Z.-Y."/>
            <person name="Wassarman D.A."/>
            <person name="Weinstock G.M."/>
            <person name="Weissenbach J."/>
            <person name="Williams S.M."/>
            <person name="Woodage T."/>
            <person name="Worley K.C."/>
            <person name="Wu D."/>
            <person name="Yang S."/>
            <person name="Yao Q.A."/>
            <person name="Ye J."/>
            <person name="Yeh R.-F."/>
            <person name="Zaveri J.S."/>
            <person name="Zhan M."/>
            <person name="Zhang G."/>
            <person name="Zhao Q."/>
            <person name="Zheng L."/>
            <person name="Zheng X.H."/>
            <person name="Zhong F.N."/>
            <person name="Zhong W."/>
            <person name="Zhou X."/>
            <person name="Zhu S.C."/>
            <person name="Zhu X."/>
            <person name="Smith H.O."/>
            <person name="Gibbs R.A."/>
            <person name="Myers E.W."/>
            <person name="Rubin G.M."/>
            <person name="Venter J.C."/>
        </authorList>
    </citation>
    <scope>NUCLEOTIDE SEQUENCE [LARGE SCALE GENOMIC DNA]</scope>
    <source>
        <strain>Berkeley</strain>
    </source>
</reference>
<reference key="4">
    <citation type="journal article" date="2002" name="Genome Biol.">
        <title>Annotation of the Drosophila melanogaster euchromatic genome: a systematic review.</title>
        <authorList>
            <person name="Misra S."/>
            <person name="Crosby M.A."/>
            <person name="Mungall C.J."/>
            <person name="Matthews B.B."/>
            <person name="Campbell K.S."/>
            <person name="Hradecky P."/>
            <person name="Huang Y."/>
            <person name="Kaminker J.S."/>
            <person name="Millburn G.H."/>
            <person name="Prochnik S.E."/>
            <person name="Smith C.D."/>
            <person name="Tupy J.L."/>
            <person name="Whitfield E.J."/>
            <person name="Bayraktaroglu L."/>
            <person name="Berman B.P."/>
            <person name="Bettencourt B.R."/>
            <person name="Celniker S.E."/>
            <person name="de Grey A.D.N.J."/>
            <person name="Drysdale R.A."/>
            <person name="Harris N.L."/>
            <person name="Richter J."/>
            <person name="Russo S."/>
            <person name="Schroeder A.J."/>
            <person name="Shu S.Q."/>
            <person name="Stapleton M."/>
            <person name="Yamada C."/>
            <person name="Ashburner M."/>
            <person name="Gelbart W.M."/>
            <person name="Rubin G.M."/>
            <person name="Lewis S.E."/>
        </authorList>
    </citation>
    <scope>GENOME REANNOTATION</scope>
    <source>
        <strain>Berkeley</strain>
    </source>
</reference>
<reference key="5">
    <citation type="journal article" date="2002" name="Genome Biol.">
        <title>A Drosophila full-length cDNA resource.</title>
        <authorList>
            <person name="Stapleton M."/>
            <person name="Carlson J.W."/>
            <person name="Brokstein P."/>
            <person name="Yu C."/>
            <person name="Champe M."/>
            <person name="George R.A."/>
            <person name="Guarin H."/>
            <person name="Kronmiller B."/>
            <person name="Pacleb J.M."/>
            <person name="Park S."/>
            <person name="Wan K.H."/>
            <person name="Rubin G.M."/>
            <person name="Celniker S.E."/>
        </authorList>
    </citation>
    <scope>NUCLEOTIDE SEQUENCE [LARGE SCALE MRNA]</scope>
    <source>
        <strain>Berkeley</strain>
        <tissue>Head</tissue>
    </source>
</reference>
<reference key="6">
    <citation type="journal article" date="1992" name="Proc. Natl. Acad. Sci. U.S.A.">
        <title>Primary structure, expression, and signal-dependent tyrosine phosphorylation of a Drosophila homolog of extracellular signal-regulated kinase.</title>
        <authorList>
            <person name="Biggs W.H. III"/>
            <person name="Zipursky S.L."/>
        </authorList>
    </citation>
    <scope>NUCLEOTIDE SEQUENCE [MRNA] OF 38-188</scope>
    <source>
        <tissue>Imaginal disk</tissue>
    </source>
</reference>
<protein>
    <recommendedName>
        <fullName evidence="6">Mitogen-activated protein kinase p38a</fullName>
        <shortName evidence="6">MAP kinase p38a</shortName>
        <shortName evidence="6">MAPK p38a</shortName>
        <ecNumber>2.7.11.24</ecNumber>
    </recommendedName>
    <alternativeName>
        <fullName evidence="8">MAP kinase 14A</fullName>
    </alternativeName>
    <alternativeName>
        <fullName evidence="5">p38 MAPK</fullName>
    </alternativeName>
</protein>
<dbReference type="EC" id="2.7.11.24"/>
<dbReference type="EMBL" id="U86867">
    <property type="protein sequence ID" value="AAB97138.1"/>
    <property type="molecule type" value="mRNA"/>
</dbReference>
<dbReference type="EMBL" id="AF035546">
    <property type="protein sequence ID" value="AAC39030.1"/>
    <property type="molecule type" value="Genomic_DNA"/>
</dbReference>
<dbReference type="EMBL" id="AF035547">
    <property type="protein sequence ID" value="AAC39031.1"/>
    <property type="molecule type" value="mRNA"/>
</dbReference>
<dbReference type="EMBL" id="AE014297">
    <property type="protein sequence ID" value="AAF56244.1"/>
    <property type="molecule type" value="Genomic_DNA"/>
</dbReference>
<dbReference type="EMBL" id="AE014297">
    <property type="protein sequence ID" value="AAN13984.1"/>
    <property type="molecule type" value="Genomic_DNA"/>
</dbReference>
<dbReference type="EMBL" id="AY071670">
    <property type="protein sequence ID" value="AAL49292.1"/>
    <property type="molecule type" value="mRNA"/>
</dbReference>
<dbReference type="RefSeq" id="NP_001163711.1">
    <property type="nucleotide sequence ID" value="NM_001170240.2"/>
</dbReference>
<dbReference type="RefSeq" id="NP_477163.1">
    <property type="nucleotide sequence ID" value="NM_057815.5"/>
</dbReference>
<dbReference type="RefSeq" id="NP_732959.1">
    <property type="nucleotide sequence ID" value="NM_170126.5"/>
</dbReference>
<dbReference type="SMR" id="O62618"/>
<dbReference type="BioGRID" id="67799">
    <property type="interactions" value="26"/>
</dbReference>
<dbReference type="FunCoup" id="O62618">
    <property type="interactions" value="1437"/>
</dbReference>
<dbReference type="IntAct" id="O62618">
    <property type="interactions" value="6"/>
</dbReference>
<dbReference type="STRING" id="7227.FBpp0083966"/>
<dbReference type="iPTMnet" id="O62618"/>
<dbReference type="PaxDb" id="7227-FBpp0083966"/>
<dbReference type="DNASU" id="42866"/>
<dbReference type="EnsemblMetazoa" id="FBtr0084580">
    <property type="protein sequence ID" value="FBpp0083965"/>
    <property type="gene ID" value="FBgn0015765"/>
</dbReference>
<dbReference type="EnsemblMetazoa" id="FBtr0084581">
    <property type="protein sequence ID" value="FBpp0083966"/>
    <property type="gene ID" value="FBgn0015765"/>
</dbReference>
<dbReference type="EnsemblMetazoa" id="FBtr0300572">
    <property type="protein sequence ID" value="FBpp0289799"/>
    <property type="gene ID" value="FBgn0015765"/>
</dbReference>
<dbReference type="GeneID" id="42866"/>
<dbReference type="KEGG" id="dme:Dmel_CG5475"/>
<dbReference type="AGR" id="FB:FBgn0015765"/>
<dbReference type="CTD" id="42866"/>
<dbReference type="FlyBase" id="FBgn0015765">
    <property type="gene designation" value="p38a"/>
</dbReference>
<dbReference type="VEuPathDB" id="VectorBase:FBgn0015765"/>
<dbReference type="eggNOG" id="KOG0660">
    <property type="taxonomic scope" value="Eukaryota"/>
</dbReference>
<dbReference type="GeneTree" id="ENSGT00940000160790"/>
<dbReference type="HOGENOM" id="CLU_000288_181_1_1"/>
<dbReference type="InParanoid" id="O62618"/>
<dbReference type="OMA" id="IFDIQRP"/>
<dbReference type="OrthoDB" id="192887at2759"/>
<dbReference type="PhylomeDB" id="O62618"/>
<dbReference type="BRENDA" id="2.7.11.24">
    <property type="organism ID" value="1994"/>
</dbReference>
<dbReference type="Reactome" id="R-DME-168638">
    <property type="pathway name" value="NOD1/2 Signaling Pathway"/>
</dbReference>
<dbReference type="Reactome" id="R-DME-171007">
    <property type="pathway name" value="p38MAPK events"/>
</dbReference>
<dbReference type="Reactome" id="R-DME-198753">
    <property type="pathway name" value="ERK/MAPK targets"/>
</dbReference>
<dbReference type="Reactome" id="R-DME-2559580">
    <property type="pathway name" value="Oxidative Stress Induced Senescence"/>
</dbReference>
<dbReference type="Reactome" id="R-DME-418592">
    <property type="pathway name" value="ADP signalling through P2Y purinoceptor 1"/>
</dbReference>
<dbReference type="Reactome" id="R-DME-432142">
    <property type="pathway name" value="Platelet sensitization by LDL"/>
</dbReference>
<dbReference type="Reactome" id="R-DME-4420097">
    <property type="pathway name" value="VEGFA-VEGFR2 Pathway"/>
</dbReference>
<dbReference type="Reactome" id="R-DME-450302">
    <property type="pathway name" value="activated TAK1 mediates p38 MAPK activation"/>
</dbReference>
<dbReference type="Reactome" id="R-DME-450341">
    <property type="pathway name" value="Activation of the AP-1 family of transcription factors"/>
</dbReference>
<dbReference type="Reactome" id="R-DME-525793">
    <property type="pathway name" value="Myogenesis"/>
</dbReference>
<dbReference type="Reactome" id="R-DME-5675221">
    <property type="pathway name" value="Negative regulation of MAPK pathway"/>
</dbReference>
<dbReference type="Reactome" id="R-DME-6798695">
    <property type="pathway name" value="Neutrophil degranulation"/>
</dbReference>
<dbReference type="Reactome" id="R-DME-9824585">
    <property type="pathway name" value="Regulation of MITF-M-dependent genes involved in pigmentation"/>
</dbReference>
<dbReference type="SignaLink" id="O62618"/>
<dbReference type="BioGRID-ORCS" id="42866">
    <property type="hits" value="0 hits in 3 CRISPR screens"/>
</dbReference>
<dbReference type="GenomeRNAi" id="42866"/>
<dbReference type="PRO" id="PR:O62618"/>
<dbReference type="Proteomes" id="UP000000803">
    <property type="component" value="Chromosome 3R"/>
</dbReference>
<dbReference type="Bgee" id="FBgn0015765">
    <property type="expression patterns" value="Expressed in crop (Drosophila) and 98 other cell types or tissues"/>
</dbReference>
<dbReference type="ExpressionAtlas" id="O62618">
    <property type="expression patterns" value="baseline and differential"/>
</dbReference>
<dbReference type="GO" id="GO:0005737">
    <property type="term" value="C:cytoplasm"/>
    <property type="evidence" value="ECO:0000318"/>
    <property type="project" value="GO_Central"/>
</dbReference>
<dbReference type="GO" id="GO:0005634">
    <property type="term" value="C:nucleus"/>
    <property type="evidence" value="ECO:0000314"/>
    <property type="project" value="FlyBase"/>
</dbReference>
<dbReference type="GO" id="GO:0005524">
    <property type="term" value="F:ATP binding"/>
    <property type="evidence" value="ECO:0007669"/>
    <property type="project" value="UniProtKB-KW"/>
</dbReference>
<dbReference type="GO" id="GO:0004707">
    <property type="term" value="F:MAP kinase activity"/>
    <property type="evidence" value="ECO:0000314"/>
    <property type="project" value="FlyBase"/>
</dbReference>
<dbReference type="GO" id="GO:0106310">
    <property type="term" value="F:protein serine kinase activity"/>
    <property type="evidence" value="ECO:0007669"/>
    <property type="project" value="RHEA"/>
</dbReference>
<dbReference type="GO" id="GO:0004674">
    <property type="term" value="F:protein serine/threonine kinase activity"/>
    <property type="evidence" value="ECO:0000318"/>
    <property type="project" value="GO_Central"/>
</dbReference>
<dbReference type="GO" id="GO:0071243">
    <property type="term" value="P:cellular response to arsenic-containing substance"/>
    <property type="evidence" value="ECO:0000314"/>
    <property type="project" value="FlyBase"/>
</dbReference>
<dbReference type="GO" id="GO:0071276">
    <property type="term" value="P:cellular response to cadmium ion"/>
    <property type="evidence" value="ECO:0000314"/>
    <property type="project" value="FlyBase"/>
</dbReference>
<dbReference type="GO" id="GO:0034614">
    <property type="term" value="P:cellular response to reactive oxygen species"/>
    <property type="evidence" value="ECO:0000314"/>
    <property type="project" value="FlyBase"/>
</dbReference>
<dbReference type="GO" id="GO:0042742">
    <property type="term" value="P:defense response to bacterium"/>
    <property type="evidence" value="ECO:0000315"/>
    <property type="project" value="FlyBase"/>
</dbReference>
<dbReference type="GO" id="GO:0050832">
    <property type="term" value="P:defense response to fungus"/>
    <property type="evidence" value="ECO:0000315"/>
    <property type="project" value="FlyBase"/>
</dbReference>
<dbReference type="GO" id="GO:0008340">
    <property type="term" value="P:determination of adult lifespan"/>
    <property type="evidence" value="ECO:0000315"/>
    <property type="project" value="FlyBase"/>
</dbReference>
<dbReference type="GO" id="GO:0003007">
    <property type="term" value="P:heart morphogenesis"/>
    <property type="evidence" value="ECO:0000316"/>
    <property type="project" value="FlyBase"/>
</dbReference>
<dbReference type="GO" id="GO:0006955">
    <property type="term" value="P:immune response"/>
    <property type="evidence" value="ECO:0000314"/>
    <property type="project" value="FlyBase"/>
</dbReference>
<dbReference type="GO" id="GO:0035556">
    <property type="term" value="P:intracellular signal transduction"/>
    <property type="evidence" value="ECO:0000318"/>
    <property type="project" value="GO_Central"/>
</dbReference>
<dbReference type="GO" id="GO:0000165">
    <property type="term" value="P:MAPK cascade"/>
    <property type="evidence" value="ECO:0000250"/>
    <property type="project" value="FlyBase"/>
</dbReference>
<dbReference type="GO" id="GO:0002385">
    <property type="term" value="P:mucosal immune response"/>
    <property type="evidence" value="ECO:0000315"/>
    <property type="project" value="FlyBase"/>
</dbReference>
<dbReference type="GO" id="GO:0008348">
    <property type="term" value="P:negative regulation of antimicrobial humoral response"/>
    <property type="evidence" value="ECO:0000315"/>
    <property type="project" value="FlyBase"/>
</dbReference>
<dbReference type="GO" id="GO:0038066">
    <property type="term" value="P:p38MAPK cascade"/>
    <property type="evidence" value="ECO:0000314"/>
    <property type="project" value="FlyBase"/>
</dbReference>
<dbReference type="GO" id="GO:0038001">
    <property type="term" value="P:paracrine signaling"/>
    <property type="evidence" value="ECO:0000316"/>
    <property type="project" value="FlyBase"/>
</dbReference>
<dbReference type="GO" id="GO:0045793">
    <property type="term" value="P:positive regulation of cell size"/>
    <property type="evidence" value="ECO:0000316"/>
    <property type="project" value="FlyBase"/>
</dbReference>
<dbReference type="GO" id="GO:0048082">
    <property type="term" value="P:regulation of adult chitin-containing cuticle pigmentation"/>
    <property type="evidence" value="ECO:0000316"/>
    <property type="project" value="FlyBase"/>
</dbReference>
<dbReference type="GO" id="GO:1900407">
    <property type="term" value="P:regulation of cellular response to oxidative stress"/>
    <property type="evidence" value="ECO:0000315"/>
    <property type="project" value="FlyBase"/>
</dbReference>
<dbReference type="GO" id="GO:0009408">
    <property type="term" value="P:response to heat"/>
    <property type="evidence" value="ECO:0000315"/>
    <property type="project" value="FlyBase"/>
</dbReference>
<dbReference type="GO" id="GO:0042542">
    <property type="term" value="P:response to hydrogen peroxide"/>
    <property type="evidence" value="ECO:0000315"/>
    <property type="project" value="FlyBase"/>
</dbReference>
<dbReference type="GO" id="GO:0006970">
    <property type="term" value="P:response to osmotic stress"/>
    <property type="evidence" value="ECO:0000314"/>
    <property type="project" value="FlyBase"/>
</dbReference>
<dbReference type="GO" id="GO:0006979">
    <property type="term" value="P:response to oxidative stress"/>
    <property type="evidence" value="ECO:0000315"/>
    <property type="project" value="FlyBase"/>
</dbReference>
<dbReference type="GO" id="GO:0042594">
    <property type="term" value="P:response to starvation"/>
    <property type="evidence" value="ECO:0000315"/>
    <property type="project" value="FlyBase"/>
</dbReference>
<dbReference type="CDD" id="cd07851">
    <property type="entry name" value="STKc_p38"/>
    <property type="match status" value="1"/>
</dbReference>
<dbReference type="FunFam" id="1.10.510.10:FF:000063">
    <property type="entry name" value="Mitogen-activated protein kinase 14"/>
    <property type="match status" value="1"/>
</dbReference>
<dbReference type="FunFam" id="3.30.200.20:FF:000769">
    <property type="entry name" value="Mitogen-activated protein kinase 14"/>
    <property type="match status" value="1"/>
</dbReference>
<dbReference type="Gene3D" id="3.30.200.20">
    <property type="entry name" value="Phosphorylase Kinase, domain 1"/>
    <property type="match status" value="1"/>
</dbReference>
<dbReference type="Gene3D" id="1.10.510.10">
    <property type="entry name" value="Transferase(Phosphotransferase) domain 1"/>
    <property type="match status" value="1"/>
</dbReference>
<dbReference type="InterPro" id="IPR011009">
    <property type="entry name" value="Kinase-like_dom_sf"/>
</dbReference>
<dbReference type="InterPro" id="IPR050117">
    <property type="entry name" value="MAP_kinase"/>
</dbReference>
<dbReference type="InterPro" id="IPR003527">
    <property type="entry name" value="MAP_kinase_CS"/>
</dbReference>
<dbReference type="InterPro" id="IPR008352">
    <property type="entry name" value="MAPK_p38-like"/>
</dbReference>
<dbReference type="InterPro" id="IPR000719">
    <property type="entry name" value="Prot_kinase_dom"/>
</dbReference>
<dbReference type="InterPro" id="IPR017441">
    <property type="entry name" value="Protein_kinase_ATP_BS"/>
</dbReference>
<dbReference type="PANTHER" id="PTHR24055">
    <property type="entry name" value="MITOGEN-ACTIVATED PROTEIN KINASE"/>
    <property type="match status" value="1"/>
</dbReference>
<dbReference type="Pfam" id="PF00069">
    <property type="entry name" value="Pkinase"/>
    <property type="match status" value="1"/>
</dbReference>
<dbReference type="PRINTS" id="PR01773">
    <property type="entry name" value="P38MAPKINASE"/>
</dbReference>
<dbReference type="SMART" id="SM00220">
    <property type="entry name" value="S_TKc"/>
    <property type="match status" value="1"/>
</dbReference>
<dbReference type="SUPFAM" id="SSF56112">
    <property type="entry name" value="Protein kinase-like (PK-like)"/>
    <property type="match status" value="1"/>
</dbReference>
<dbReference type="PROSITE" id="PS01351">
    <property type="entry name" value="MAPK"/>
    <property type="match status" value="1"/>
</dbReference>
<dbReference type="PROSITE" id="PS00107">
    <property type="entry name" value="PROTEIN_KINASE_ATP"/>
    <property type="match status" value="1"/>
</dbReference>
<dbReference type="PROSITE" id="PS50011">
    <property type="entry name" value="PROTEIN_KINASE_DOM"/>
    <property type="match status" value="1"/>
</dbReference>
<comment type="function">
    <text evidence="3 4">Kinase involved in a signal transduction pathway. May down-regulate insect immunity gene expression after prolonged infection.</text>
</comment>
<comment type="catalytic activity">
    <reaction>
        <text>L-seryl-[protein] + ATP = O-phospho-L-seryl-[protein] + ADP + H(+)</text>
        <dbReference type="Rhea" id="RHEA:17989"/>
        <dbReference type="Rhea" id="RHEA-COMP:9863"/>
        <dbReference type="Rhea" id="RHEA-COMP:11604"/>
        <dbReference type="ChEBI" id="CHEBI:15378"/>
        <dbReference type="ChEBI" id="CHEBI:29999"/>
        <dbReference type="ChEBI" id="CHEBI:30616"/>
        <dbReference type="ChEBI" id="CHEBI:83421"/>
        <dbReference type="ChEBI" id="CHEBI:456216"/>
        <dbReference type="EC" id="2.7.11.24"/>
    </reaction>
</comment>
<comment type="catalytic activity">
    <reaction>
        <text>L-threonyl-[protein] + ATP = O-phospho-L-threonyl-[protein] + ADP + H(+)</text>
        <dbReference type="Rhea" id="RHEA:46608"/>
        <dbReference type="Rhea" id="RHEA-COMP:11060"/>
        <dbReference type="Rhea" id="RHEA-COMP:11605"/>
        <dbReference type="ChEBI" id="CHEBI:15378"/>
        <dbReference type="ChEBI" id="CHEBI:30013"/>
        <dbReference type="ChEBI" id="CHEBI:30616"/>
        <dbReference type="ChEBI" id="CHEBI:61977"/>
        <dbReference type="ChEBI" id="CHEBI:456216"/>
        <dbReference type="EC" id="2.7.11.24"/>
    </reaction>
</comment>
<comment type="cofactor">
    <cofactor evidence="1">
        <name>Mg(2+)</name>
        <dbReference type="ChEBI" id="CHEBI:18420"/>
    </cofactor>
</comment>
<comment type="activity regulation">
    <text evidence="3 4">Activated by threonine and tyrosine phosphorylation by Mkk3 in response to environmental stress.</text>
</comment>
<comment type="subcellular location">
    <subcellularLocation>
        <location evidence="3">Nucleus</location>
    </subcellularLocation>
</comment>
<comment type="developmental stage">
    <text evidence="4">Expressed both maternally and zygotically. Levels are highest at the preblastoderm stage but low levels are present throughout development.</text>
</comment>
<comment type="domain">
    <text>The TXY motif contains the threonine and tyrosine residues whose phosphorylation activates the MAP kinases.</text>
</comment>
<comment type="PTM">
    <text evidence="3">Dually phosphorylated on Thr-184 and Tyr-186, which activates the enzyme.</text>
</comment>
<comment type="similarity">
    <text evidence="7">Belongs to the protein kinase superfamily. CMGC Ser/Thr protein kinase family. MAP kinase subfamily.</text>
</comment>
<gene>
    <name evidence="6 8" type="primary">p38a</name>
    <name evidence="8" type="synonym">Mpk2</name>
    <name evidence="8" type="ORF">CG5475</name>
</gene>
<name>MK38A_DROME</name>
<feature type="chain" id="PRO_0000186300" description="Mitogen-activated protein kinase p38a">
    <location>
        <begin position="1"/>
        <end position="366"/>
    </location>
</feature>
<feature type="domain" description="Protein kinase" evidence="2">
    <location>
        <begin position="25"/>
        <end position="312"/>
    </location>
</feature>
<feature type="short sequence motif" description="TXY">
    <location>
        <begin position="184"/>
        <end position="186"/>
    </location>
</feature>
<feature type="active site" description="Proton acceptor" evidence="2">
    <location>
        <position position="154"/>
    </location>
</feature>
<feature type="binding site" evidence="2">
    <location>
        <begin position="31"/>
        <end position="39"/>
    </location>
    <ligand>
        <name>ATP</name>
        <dbReference type="ChEBI" id="CHEBI:30616"/>
    </ligand>
</feature>
<feature type="binding site" evidence="2">
    <location>
        <position position="54"/>
    </location>
    <ligand>
        <name>ATP</name>
        <dbReference type="ChEBI" id="CHEBI:30616"/>
    </ligand>
</feature>
<feature type="modified residue" description="Phosphothreonine" evidence="1">
    <location>
        <position position="184"/>
    </location>
</feature>
<feature type="modified residue" description="Phosphotyrosine" evidence="3">
    <location>
        <position position="186"/>
    </location>
</feature>
<feature type="sequence conflict" description="In Ref. 2; AAB97138." evidence="7" ref="2">
    <original>D</original>
    <variation>G</variation>
    <location>
        <position position="27"/>
    </location>
</feature>
<feature type="sequence conflict" description="In Ref. 6." evidence="7" ref="6">
    <original>K</original>
    <variation>R</variation>
    <location>
        <position position="77"/>
    </location>
</feature>
<feature type="sequence conflict" description="In Ref. 2; AAB97138." evidence="7" ref="2">
    <original>D</original>
    <variation>A</variation>
    <location>
        <position position="80"/>
    </location>
</feature>
<feature type="sequence conflict" description="In Ref. 6." evidence="7" ref="6">
    <original>L</original>
    <variation>LL</variation>
    <location>
        <position position="108"/>
    </location>
</feature>
<feature type="sequence conflict" description="In Ref. 6." evidence="7" ref="6">
    <original>Q</original>
    <variation>QQ</variation>
    <location>
        <position position="124"/>
    </location>
</feature>
<feature type="sequence conflict" description="In Ref. 6." evidence="7" ref="6">
    <location>
        <position position="149"/>
    </location>
</feature>
<feature type="sequence conflict" description="In Ref. 6." evidence="7" ref="6">
    <original>N</original>
    <variation>NN</variation>
    <location>
        <position position="163"/>
    </location>
</feature>
<organism>
    <name type="scientific">Drosophila melanogaster</name>
    <name type="common">Fruit fly</name>
    <dbReference type="NCBI Taxonomy" id="7227"/>
    <lineage>
        <taxon>Eukaryota</taxon>
        <taxon>Metazoa</taxon>
        <taxon>Ecdysozoa</taxon>
        <taxon>Arthropoda</taxon>
        <taxon>Hexapoda</taxon>
        <taxon>Insecta</taxon>
        <taxon>Pterygota</taxon>
        <taxon>Neoptera</taxon>
        <taxon>Endopterygota</taxon>
        <taxon>Diptera</taxon>
        <taxon>Brachycera</taxon>
        <taxon>Muscomorpha</taxon>
        <taxon>Ephydroidea</taxon>
        <taxon>Drosophilidae</taxon>
        <taxon>Drosophila</taxon>
        <taxon>Sophophora</taxon>
    </lineage>
</organism>
<keyword id="KW-0067">ATP-binding</keyword>
<keyword id="KW-0418">Kinase</keyword>
<keyword id="KW-0547">Nucleotide-binding</keyword>
<keyword id="KW-0539">Nucleus</keyword>
<keyword id="KW-0597">Phosphoprotein</keyword>
<keyword id="KW-1185">Reference proteome</keyword>
<keyword id="KW-0723">Serine/threonine-protein kinase</keyword>
<keyword id="KW-0808">Transferase</keyword>
<evidence type="ECO:0000250" key="1"/>
<evidence type="ECO:0000255" key="2">
    <source>
        <dbReference type="PROSITE-ProRule" id="PRU00159"/>
    </source>
</evidence>
<evidence type="ECO:0000269" key="3">
    <source>
    </source>
</evidence>
<evidence type="ECO:0000269" key="4">
    <source>
    </source>
</evidence>
<evidence type="ECO:0000303" key="5">
    <source>
    </source>
</evidence>
<evidence type="ECO:0000303" key="6">
    <source>
    </source>
</evidence>
<evidence type="ECO:0000305" key="7"/>
<evidence type="ECO:0000312" key="8">
    <source>
        <dbReference type="FlyBase" id="FBgn0015765"/>
    </source>
</evidence>